<gene>
    <name type="primary">HDAC9</name>
    <name type="synonym">HDAC7</name>
    <name type="synonym">HDAC7B</name>
    <name type="synonym">HDRP</name>
    <name type="synonym">KIAA0744</name>
    <name type="synonym">MITR</name>
</gene>
<proteinExistence type="evidence at protein level"/>
<comment type="function">
    <text evidence="7">Responsible for the deacetylation of lysine residues on the N-terminal part of the core histones (H2A, H2B, H3 and H4). Histone deacetylation gives a tag for epigenetic repression and plays an important role in transcriptional regulation, cell cycle progression and developmental events. Represses MEF2-dependent transcription.</text>
</comment>
<comment type="function">
    <text>Isoform 3 lacks active site residues and therefore is catalytically inactive. Represses MEF2-dependent transcription by recruiting HDAC1 and/or HDAC3. Seems to inhibit skeletal myogenesis and to be involved in heart development. Protects neurons from apoptosis, both by inhibiting JUN phosphorylation by MAPK10 and by repressing JUN transcription via HDAC1 recruitment to JUN promoter.</text>
</comment>
<comment type="catalytic activity">
    <reaction evidence="7">
        <text>N(6)-acetyl-L-lysyl-[histone] + H2O = L-lysyl-[histone] + acetate</text>
        <dbReference type="Rhea" id="RHEA:58196"/>
        <dbReference type="Rhea" id="RHEA-COMP:9845"/>
        <dbReference type="Rhea" id="RHEA-COMP:11338"/>
        <dbReference type="ChEBI" id="CHEBI:15377"/>
        <dbReference type="ChEBI" id="CHEBI:29969"/>
        <dbReference type="ChEBI" id="CHEBI:30089"/>
        <dbReference type="ChEBI" id="CHEBI:61930"/>
        <dbReference type="EC" id="3.5.1.98"/>
    </reaction>
</comment>
<comment type="activity regulation">
    <text evidence="7">Inhibited by Trichostatin A (TSA) and suberoylanilide hydroxamic acid.</text>
</comment>
<comment type="subunit">
    <text evidence="2 4 5 6 7 9 11">Homodimer. Interacts with CTBP1. The phosphorylated form interacts with 14-3-3 (By similarity). Interacts with HDAC1 and HDAC3, and probably with HDAC4 and HDAC5. Interacts with MEF2, MAPK10, ETV6, NCOR1 and BCL6. Interacts with FOXP3 in the absence of T-cell stimulation.</text>
</comment>
<comment type="interaction">
    <interactant intactId="EBI-765444">
        <id>Q9UKV0</id>
    </interactant>
    <interactant intactId="EBI-765407">
        <id>P41182</id>
        <label>BCL6</label>
    </interactant>
    <organismsDiffer>false</organismsDiffer>
    <experiments>2</experiments>
</comment>
<comment type="interaction">
    <interactant intactId="EBI-765444">
        <id>Q9UKV0</id>
    </interactant>
    <interactant intactId="EBI-2684075">
        <id>Q06413</id>
        <label>MEF2C</label>
    </interactant>
    <organismsDiffer>false</organismsDiffer>
    <experiments>3</experiments>
</comment>
<comment type="interaction">
    <interactant intactId="EBI-765476">
        <id>Q9UKV0-3</id>
    </interactant>
    <interactant intactId="EBI-1372759">
        <id>P41212</id>
        <label>ETV6</label>
    </interactant>
    <organismsDiffer>false</organismsDiffer>
    <experiments>3</experiments>
</comment>
<comment type="interaction">
    <interactant intactId="EBI-765476">
        <id>Q9UKV0-3</id>
    </interactant>
    <interactant intactId="EBI-349004">
        <id>Q60974</id>
        <label>Ncor1</label>
    </interactant>
    <organismsDiffer>true</organismsDiffer>
    <experiments>2</experiments>
</comment>
<comment type="interaction">
    <interactant intactId="EBI-1372717">
        <id>Q9UKV0-7</id>
    </interactant>
    <interactant intactId="EBI-349004">
        <id>Q60974</id>
        <label>Ncor1</label>
    </interactant>
    <organismsDiffer>true</organismsDiffer>
    <experiments>3</experiments>
</comment>
<comment type="subcellular location">
    <subcellularLocation>
        <location evidence="1">Nucleus</location>
    </subcellularLocation>
</comment>
<comment type="alternative products">
    <event type="alternative splicing"/>
    <isoform>
        <id>Q9UKV0-1</id>
        <name>1</name>
        <sequence type="displayed"/>
    </isoform>
    <isoform>
        <id>Q9UKV0-2</id>
        <name>2</name>
        <sequence type="described" ref="VSP_002082"/>
    </isoform>
    <isoform>
        <id>Q9UKV0-3</id>
        <name>3</name>
        <name>HDRP</name>
        <name>MITR</name>
        <sequence type="described" ref="VSP_002083 VSP_002084"/>
    </isoform>
    <isoform>
        <id>Q9UKV0-4</id>
        <name>4</name>
        <name>HDAC9a</name>
        <sequence type="described" ref="VSP_002085 VSP_002086"/>
    </isoform>
    <isoform>
        <id>Q9UKV0-5</id>
        <name>5</name>
        <name>HDAC9b</name>
        <name>HDAC9fl</name>
        <sequence type="described" ref="VSP_023768"/>
    </isoform>
    <isoform>
        <id>Q9UKV0-6</id>
        <name>6</name>
        <sequence type="described" ref="VSP_023766 VSP_023767 VSP_023768"/>
    </isoform>
    <isoform>
        <id>Q9UKV0-7</id>
        <name>7</name>
        <sequence type="described" ref="VSP_023766 VSP_023768"/>
    </isoform>
    <isoform>
        <id>Q9UKV0-8</id>
        <name>8</name>
        <sequence type="described" ref="VSP_043428 VSP_023767 VSP_002083 VSP_002084"/>
    </isoform>
    <isoform>
        <id>Q9UKV0-9</id>
        <name>9</name>
        <sequence type="described" ref="VSP_023767 VSP_002083 VSP_002084"/>
    </isoform>
    <isoform>
        <id>Q9UKV0-10</id>
        <name>10</name>
        <sequence type="described" ref="VSP_046827 VSP_023766 VSP_002083 VSP_002084"/>
    </isoform>
    <isoform>
        <id>Q9UKV0-11</id>
        <name>11</name>
        <sequence type="described" ref="VSP_046827 VSP_046828 VSP_023767 VSP_002083 VSP_002084"/>
    </isoform>
    <text>Additional isoforms seem to exist.</text>
</comment>
<comment type="tissue specificity">
    <text evidence="6 7 9 10">Broadly expressed, with highest levels in brain, heart, muscle and testis. Isoform 3 is present in human bladder carcinoma cells (at protein level).</text>
</comment>
<comment type="PTM">
    <text evidence="1 12">Phosphorylated on Ser-220 and Ser-450; which promotes 14-3-3-binding, impairs interaction with MEF2, and antagonizes antimyogenic activity. Phosphorylated on Ser-240; which impairs nuclear accumulation (By similarity). Isoform 7 is phosphorylated on Tyr-1010. Phosphorylated by the PKC kinases PKN1 and PKN2, impairing nuclear import.</text>
</comment>
<comment type="PTM">
    <text evidence="8 9">Sumoylated.</text>
</comment>
<comment type="disease" evidence="14">
    <disease id="DI-06729">
        <name>Auriculocondylar syndrome 4</name>
        <acronym>ARCND4</acronym>
        <description>An autosomal dominant form of auriculocondylar syndrome, a craniofacial malformation syndrome characterized by variable mandibular anomalies, including mild to severe micrognathia, temporomandibular joint ankylosis, cleft palate, and a characteristic ear malformation that consists of separation of the lobule from the external ear, giving the appearance of a question mark (question-mark ear). Other frequently described features include prominent cheeks, cupped and posteriorly rotated ears, preauricular tags, and microstomia. Glossoptosis, masticatory abnormalities, orthodontic problems, and malocclusion occur in a majority of affected subjects.</description>
        <dbReference type="MIM" id="620457"/>
    </disease>
    <text>The disease may be caused by variants affecting the gene represented in this entry.</text>
</comment>
<comment type="disease">
    <text evidence="10">A chromosomal aberration involving HDAC9 is found in a family with Peters anomaly. Translocation t(1;7)(q41;p21) with TGFB2 resulting in lack of HDAC9 protein.</text>
</comment>
<comment type="miscellaneous">
    <molecule>Isoform 3</molecule>
    <text evidence="22">Major form in most tissues. Inactive due to lack of active site residues.</text>
</comment>
<comment type="miscellaneous">
    <molecule>Isoform 6</molecule>
    <text evidence="22">Excluded from the nucleus. Does not interact with ETV6.</text>
</comment>
<comment type="similarity">
    <text evidence="22">Belongs to the histone deacetylase family. HD type 2 subfamily.</text>
</comment>
<comment type="sequence caution" evidence="22">
    <conflict type="erroneous initiation">
        <sequence resource="EMBL-CDS" id="BAA34464"/>
    </conflict>
</comment>
<comment type="sequence caution" evidence="22">
    <molecule>Isoform 6</molecule>
    <conflict type="frameshift">
        <sequence resource="EMBL-CDS" id="AAI11736"/>
    </conflict>
</comment>
<keyword id="KW-0002">3D-structure</keyword>
<keyword id="KW-0025">Alternative splicing</keyword>
<keyword id="KW-0156">Chromatin regulator</keyword>
<keyword id="KW-0160">Chromosomal rearrangement</keyword>
<keyword id="KW-0378">Hydrolase</keyword>
<keyword id="KW-0479">Metal-binding</keyword>
<keyword id="KW-0539">Nucleus</keyword>
<keyword id="KW-0597">Phosphoprotein</keyword>
<keyword id="KW-1267">Proteomics identification</keyword>
<keyword id="KW-1185">Reference proteome</keyword>
<keyword id="KW-0678">Repressor</keyword>
<keyword id="KW-0804">Transcription</keyword>
<keyword id="KW-0805">Transcription regulation</keyword>
<keyword id="KW-0832">Ubl conjugation</keyword>
<keyword id="KW-0862">Zinc</keyword>
<dbReference type="EC" id="3.5.1.98" evidence="7"/>
<dbReference type="EMBL" id="AY032737">
    <property type="protein sequence ID" value="AAK66821.1"/>
    <property type="molecule type" value="mRNA"/>
</dbReference>
<dbReference type="EMBL" id="AY032738">
    <property type="protein sequence ID" value="AAK66822.1"/>
    <property type="molecule type" value="mRNA"/>
</dbReference>
<dbReference type="EMBL" id="AJ459808">
    <property type="protein sequence ID" value="CAD30851.1"/>
    <property type="molecule type" value="mRNA"/>
</dbReference>
<dbReference type="EMBL" id="AY197371">
    <property type="protein sequence ID" value="AAO27363.1"/>
    <property type="molecule type" value="mRNA"/>
</dbReference>
<dbReference type="EMBL" id="AB018287">
    <property type="protein sequence ID" value="BAA34464.2"/>
    <property type="status" value="ALT_INIT"/>
    <property type="molecule type" value="mRNA"/>
</dbReference>
<dbReference type="EMBL" id="AK297404">
    <property type="protein sequence ID" value="BAH12570.1"/>
    <property type="molecule type" value="mRNA"/>
</dbReference>
<dbReference type="EMBL" id="AK304298">
    <property type="protein sequence ID" value="BAH14153.1"/>
    <property type="molecule type" value="mRNA"/>
</dbReference>
<dbReference type="EMBL" id="AK304343">
    <property type="protein sequence ID" value="BAH14164.1"/>
    <property type="molecule type" value="mRNA"/>
</dbReference>
<dbReference type="EMBL" id="AK304410">
    <property type="protein sequence ID" value="BAH14176.1"/>
    <property type="molecule type" value="mRNA"/>
</dbReference>
<dbReference type="EMBL" id="AC002088">
    <property type="status" value="NOT_ANNOTATED_CDS"/>
    <property type="molecule type" value="Genomic_DNA"/>
</dbReference>
<dbReference type="EMBL" id="AC002124">
    <property type="status" value="NOT_ANNOTATED_CDS"/>
    <property type="molecule type" value="Genomic_DNA"/>
</dbReference>
<dbReference type="EMBL" id="AC002410">
    <property type="status" value="NOT_ANNOTATED_CDS"/>
    <property type="molecule type" value="Genomic_DNA"/>
</dbReference>
<dbReference type="EMBL" id="AC002433">
    <property type="status" value="NOT_ANNOTATED_CDS"/>
    <property type="molecule type" value="Genomic_DNA"/>
</dbReference>
<dbReference type="EMBL" id="AC004744">
    <property type="status" value="NOT_ANNOTATED_CDS"/>
    <property type="molecule type" value="Genomic_DNA"/>
</dbReference>
<dbReference type="EMBL" id="AC004994">
    <property type="status" value="NOT_ANNOTATED_CDS"/>
    <property type="molecule type" value="Genomic_DNA"/>
</dbReference>
<dbReference type="EMBL" id="AC005249">
    <property type="status" value="NOT_ANNOTATED_CDS"/>
    <property type="molecule type" value="Genomic_DNA"/>
</dbReference>
<dbReference type="EMBL" id="AC010082">
    <property type="status" value="NOT_ANNOTATED_CDS"/>
    <property type="molecule type" value="Genomic_DNA"/>
</dbReference>
<dbReference type="EMBL" id="AC074193">
    <property type="status" value="NOT_ANNOTATED_CDS"/>
    <property type="molecule type" value="Genomic_DNA"/>
</dbReference>
<dbReference type="EMBL" id="AC091697">
    <property type="status" value="NOT_ANNOTATED_CDS"/>
    <property type="molecule type" value="Genomic_DNA"/>
</dbReference>
<dbReference type="EMBL" id="CH471073">
    <property type="protein sequence ID" value="EAW93702.1"/>
    <property type="molecule type" value="Genomic_DNA"/>
</dbReference>
<dbReference type="EMBL" id="CH471073">
    <property type="protein sequence ID" value="EAW93703.1"/>
    <property type="molecule type" value="Genomic_DNA"/>
</dbReference>
<dbReference type="EMBL" id="BC111735">
    <property type="protein sequence ID" value="AAI11736.1"/>
    <property type="status" value="ALT_FRAME"/>
    <property type="molecule type" value="mRNA"/>
</dbReference>
<dbReference type="EMBL" id="BC150328">
    <property type="protein sequence ID" value="AAI50329.1"/>
    <property type="molecule type" value="mRNA"/>
</dbReference>
<dbReference type="EMBL" id="BC152405">
    <property type="protein sequence ID" value="AAI52406.1"/>
    <property type="molecule type" value="mRNA"/>
</dbReference>
<dbReference type="EMBL" id="AF124924">
    <property type="protein sequence ID" value="AAF04254.1"/>
    <property type="molecule type" value="mRNA"/>
</dbReference>
<dbReference type="CCDS" id="CCDS47553.1">
    <molecule id="Q9UKV0-7"/>
</dbReference>
<dbReference type="CCDS" id="CCDS47554.1">
    <molecule id="Q9UKV0-5"/>
</dbReference>
<dbReference type="CCDS" id="CCDS47555.1">
    <molecule id="Q9UKV0-1"/>
</dbReference>
<dbReference type="CCDS" id="CCDS47557.1">
    <molecule id="Q9UKV0-3"/>
</dbReference>
<dbReference type="CCDS" id="CCDS56465.1">
    <molecule id="Q9UKV0-8"/>
</dbReference>
<dbReference type="CCDS" id="CCDS56466.1">
    <molecule id="Q9UKV0-9"/>
</dbReference>
<dbReference type="CCDS" id="CCDS56467.1">
    <molecule id="Q9UKV0-10"/>
</dbReference>
<dbReference type="CCDS" id="CCDS56468.1">
    <molecule id="Q9UKV0-11"/>
</dbReference>
<dbReference type="CCDS" id="CCDS83163.1">
    <molecule id="Q9UKV0-6"/>
</dbReference>
<dbReference type="RefSeq" id="NP_001191073.1">
    <molecule id="Q9UKV0-8"/>
    <property type="nucleotide sequence ID" value="NM_001204144.3"/>
</dbReference>
<dbReference type="RefSeq" id="NP_001191074.1">
    <molecule id="Q9UKV0-9"/>
    <property type="nucleotide sequence ID" value="NM_001204145.3"/>
</dbReference>
<dbReference type="RefSeq" id="NP_001191075.1">
    <property type="nucleotide sequence ID" value="NM_001204146.2"/>
</dbReference>
<dbReference type="RefSeq" id="NP_001191076.1">
    <molecule id="Q9UKV0-11"/>
    <property type="nucleotide sequence ID" value="NM_001204147.3"/>
</dbReference>
<dbReference type="RefSeq" id="NP_001191077.1">
    <molecule id="Q9UKV0-10"/>
    <property type="nucleotide sequence ID" value="NM_001204148.3"/>
</dbReference>
<dbReference type="RefSeq" id="NP_001308797.1">
    <property type="nucleotide sequence ID" value="NM_001321868.1"/>
</dbReference>
<dbReference type="RefSeq" id="NP_001308798.1">
    <property type="nucleotide sequence ID" value="NM_001321869.1"/>
</dbReference>
<dbReference type="RefSeq" id="NP_001308799.1">
    <property type="nucleotide sequence ID" value="NM_001321870.1"/>
</dbReference>
<dbReference type="RefSeq" id="NP_001308800.1">
    <property type="nucleotide sequence ID" value="NM_001321871.1"/>
</dbReference>
<dbReference type="RefSeq" id="NP_001308801.1">
    <property type="nucleotide sequence ID" value="NM_001321872.1"/>
</dbReference>
<dbReference type="RefSeq" id="NP_001308802.1">
    <property type="nucleotide sequence ID" value="NM_001321873.1"/>
</dbReference>
<dbReference type="RefSeq" id="NP_001308803.1">
    <property type="nucleotide sequence ID" value="NM_001321874.1"/>
</dbReference>
<dbReference type="RefSeq" id="NP_001308804.1">
    <property type="nucleotide sequence ID" value="NM_001321875.1"/>
</dbReference>
<dbReference type="RefSeq" id="NP_001308805.1">
    <property type="nucleotide sequence ID" value="NM_001321876.1"/>
</dbReference>
<dbReference type="RefSeq" id="NP_001308806.1">
    <molecule id="Q9UKV0-6"/>
    <property type="nucleotide sequence ID" value="NM_001321877.2"/>
</dbReference>
<dbReference type="RefSeq" id="NP_001308807.1">
    <property type="nucleotide sequence ID" value="NM_001321878.1"/>
</dbReference>
<dbReference type="RefSeq" id="NP_001308808.1">
    <property type="nucleotide sequence ID" value="NM_001321879.1"/>
</dbReference>
<dbReference type="RefSeq" id="NP_001308813.1">
    <property type="nucleotide sequence ID" value="NM_001321884.1"/>
</dbReference>
<dbReference type="RefSeq" id="NP_001308814.1">
    <property type="nucleotide sequence ID" value="NM_001321885.1"/>
</dbReference>
<dbReference type="RefSeq" id="NP_001308815.1">
    <property type="nucleotide sequence ID" value="NM_001321886.1"/>
</dbReference>
<dbReference type="RefSeq" id="NP_001308816.1">
    <property type="nucleotide sequence ID" value="NM_001321887.1"/>
</dbReference>
<dbReference type="RefSeq" id="NP_001308817.1">
    <property type="nucleotide sequence ID" value="NM_001321888.1"/>
</dbReference>
<dbReference type="RefSeq" id="NP_001308818.1">
    <property type="nucleotide sequence ID" value="NM_001321889.1"/>
</dbReference>
<dbReference type="RefSeq" id="NP_001308819.1">
    <property type="nucleotide sequence ID" value="NM_001321890.1"/>
</dbReference>
<dbReference type="RefSeq" id="NP_001308820.1">
    <molecule id="Q9UKV0-9"/>
    <property type="nucleotide sequence ID" value="NM_001321891.2"/>
</dbReference>
<dbReference type="RefSeq" id="NP_001308822.1">
    <molecule id="Q9UKV0-9"/>
    <property type="nucleotide sequence ID" value="NM_001321893.2"/>
</dbReference>
<dbReference type="RefSeq" id="NP_001308823.1">
    <property type="nucleotide sequence ID" value="NM_001321894.1"/>
</dbReference>
<dbReference type="RefSeq" id="NP_001308824.1">
    <property type="nucleotide sequence ID" value="NM_001321895.1"/>
</dbReference>
<dbReference type="RefSeq" id="NP_001308825.1">
    <molecule id="Q9UKV0-10"/>
    <property type="nucleotide sequence ID" value="NM_001321896.2"/>
</dbReference>
<dbReference type="RefSeq" id="NP_001308826.1">
    <molecule id="Q9UKV0-6"/>
    <property type="nucleotide sequence ID" value="NM_001321897.2"/>
</dbReference>
<dbReference type="RefSeq" id="NP_001308827.1">
    <property type="nucleotide sequence ID" value="NM_001321898.1"/>
</dbReference>
<dbReference type="RefSeq" id="NP_001308828.1">
    <property type="nucleotide sequence ID" value="NM_001321899.1"/>
</dbReference>
<dbReference type="RefSeq" id="NP_001308829.1">
    <molecule id="Q9UKV0-3"/>
    <property type="nucleotide sequence ID" value="NM_001321900.2"/>
</dbReference>
<dbReference type="RefSeq" id="NP_001308830.1">
    <property type="nucleotide sequence ID" value="NM_001321901.1"/>
</dbReference>
<dbReference type="RefSeq" id="NP_001308831.1">
    <property type="nucleotide sequence ID" value="NM_001321902.1"/>
</dbReference>
<dbReference type="RefSeq" id="NP_055522.1">
    <molecule id="Q9UKV0-3"/>
    <property type="nucleotide sequence ID" value="NM_014707.4"/>
</dbReference>
<dbReference type="RefSeq" id="NP_478056.1">
    <molecule id="Q9UKV0-1"/>
    <property type="nucleotide sequence ID" value="NM_058176.2"/>
</dbReference>
<dbReference type="RefSeq" id="NP_848510.1">
    <molecule id="Q9UKV0-5"/>
    <property type="nucleotide sequence ID" value="NM_178423.3"/>
</dbReference>
<dbReference type="RefSeq" id="NP_848512.1">
    <molecule id="Q9UKV0-7"/>
    <property type="nucleotide sequence ID" value="NM_178425.4"/>
</dbReference>
<dbReference type="RefSeq" id="XP_011513940.1">
    <property type="nucleotide sequence ID" value="XM_011515638.2"/>
</dbReference>
<dbReference type="RefSeq" id="XP_011513941.1">
    <property type="nucleotide sequence ID" value="XM_011515639.2"/>
</dbReference>
<dbReference type="RefSeq" id="XP_016868315.1">
    <property type="nucleotide sequence ID" value="XM_017012826.1"/>
</dbReference>
<dbReference type="RefSeq" id="XP_016868317.1">
    <property type="nucleotide sequence ID" value="XM_017012828.1"/>
</dbReference>
<dbReference type="PDB" id="8Q9N">
    <property type="method" value="X-ray"/>
    <property type="resolution" value="1.51 A"/>
    <property type="chains" value="X=139-155"/>
</dbReference>
<dbReference type="PDB" id="8Q9R">
    <property type="method" value="X-ray"/>
    <property type="resolution" value="2.25 A"/>
    <property type="chains" value="C/X=139-155"/>
</dbReference>
<dbReference type="PDBsum" id="8Q9N"/>
<dbReference type="PDBsum" id="8Q9R"/>
<dbReference type="SMR" id="Q9UKV0"/>
<dbReference type="BioGRID" id="115083">
    <property type="interactions" value="76"/>
</dbReference>
<dbReference type="CORUM" id="Q9UKV0"/>
<dbReference type="DIP" id="DIP-39904N"/>
<dbReference type="ELM" id="Q9UKV0"/>
<dbReference type="FunCoup" id="Q9UKV0">
    <property type="interactions" value="1235"/>
</dbReference>
<dbReference type="IntAct" id="Q9UKV0">
    <property type="interactions" value="43"/>
</dbReference>
<dbReference type="MINT" id="Q9UKV0"/>
<dbReference type="STRING" id="9606.ENSP00000408617"/>
<dbReference type="BindingDB" id="Q9UKV0"/>
<dbReference type="ChEMBL" id="CHEMBL4145"/>
<dbReference type="DrugBank" id="DB12565">
    <property type="generic name" value="Abexinostat"/>
</dbReference>
<dbReference type="DrugBank" id="DB05015">
    <property type="generic name" value="Belinostat"/>
</dbReference>
<dbReference type="DrugBank" id="DB01262">
    <property type="generic name" value="Decitabine"/>
</dbReference>
<dbReference type="DrugBank" id="DB11841">
    <property type="generic name" value="Entinostat"/>
</dbReference>
<dbReference type="DrugBank" id="DB12645">
    <property type="generic name" value="Givinostat"/>
</dbReference>
<dbReference type="DrugBank" id="DB14979">
    <property type="generic name" value="Martinostat"/>
</dbReference>
<dbReference type="DrugBank" id="DB06603">
    <property type="generic name" value="Panobinostat"/>
</dbReference>
<dbReference type="DrugBank" id="DB06819">
    <property type="generic name" value="Phenylbutyric acid"/>
</dbReference>
<dbReference type="DrugBank" id="DB03766">
    <property type="generic name" value="Propanoic acid"/>
</dbReference>
<dbReference type="DrugBank" id="DB12847">
    <property type="generic name" value="Pyroxamide"/>
</dbReference>
<dbReference type="DrugBank" id="DB06176">
    <property type="generic name" value="Romidepsin"/>
</dbReference>
<dbReference type="DrugBank" id="DB00313">
    <property type="generic name" value="Valproic acid"/>
</dbReference>
<dbReference type="DrugBank" id="DB02546">
    <property type="generic name" value="Vorinostat"/>
</dbReference>
<dbReference type="DrugCentral" id="Q9UKV0"/>
<dbReference type="GuidetoPHARMACOLOGY" id="2620"/>
<dbReference type="GlyGen" id="Q9UKV0">
    <property type="glycosylation" value="2 sites, 1 O-linked glycan (1 site)"/>
</dbReference>
<dbReference type="iPTMnet" id="Q9UKV0"/>
<dbReference type="PhosphoSitePlus" id="Q9UKV0"/>
<dbReference type="BioMuta" id="HDAC9"/>
<dbReference type="DMDM" id="19865267"/>
<dbReference type="jPOST" id="Q9UKV0"/>
<dbReference type="MassIVE" id="Q9UKV0"/>
<dbReference type="PaxDb" id="9606-ENSP00000408617"/>
<dbReference type="PeptideAtlas" id="Q9UKV0"/>
<dbReference type="ProteomicsDB" id="11455"/>
<dbReference type="ProteomicsDB" id="18971"/>
<dbReference type="ProteomicsDB" id="30309"/>
<dbReference type="ProteomicsDB" id="84881">
    <molecule id="Q9UKV0-1"/>
</dbReference>
<dbReference type="ProteomicsDB" id="84882">
    <molecule id="Q9UKV0-2"/>
</dbReference>
<dbReference type="ProteomicsDB" id="84883">
    <molecule id="Q9UKV0-3"/>
</dbReference>
<dbReference type="ProteomicsDB" id="84884">
    <molecule id="Q9UKV0-4"/>
</dbReference>
<dbReference type="ProteomicsDB" id="84885">
    <molecule id="Q9UKV0-5"/>
</dbReference>
<dbReference type="ProteomicsDB" id="84886">
    <molecule id="Q9UKV0-6"/>
</dbReference>
<dbReference type="ProteomicsDB" id="84887">
    <molecule id="Q9UKV0-7"/>
</dbReference>
<dbReference type="ProteomicsDB" id="84888">
    <molecule id="Q9UKV0-8"/>
</dbReference>
<dbReference type="Antibodypedia" id="6494">
    <property type="antibodies" value="647 antibodies from 39 providers"/>
</dbReference>
<dbReference type="DNASU" id="9734"/>
<dbReference type="Ensembl" id="ENST00000401921.5">
    <molecule id="Q9UKV0-6"/>
    <property type="protein sequence ID" value="ENSP00000383912.1"/>
    <property type="gene ID" value="ENSG00000048052.25"/>
</dbReference>
<dbReference type="Ensembl" id="ENST00000405010.7">
    <molecule id="Q9UKV0-3"/>
    <property type="protein sequence ID" value="ENSP00000384382.3"/>
    <property type="gene ID" value="ENSG00000048052.25"/>
</dbReference>
<dbReference type="Ensembl" id="ENST00000406451.8">
    <molecule id="Q9UKV0-5"/>
    <property type="protein sequence ID" value="ENSP00000384657.3"/>
    <property type="gene ID" value="ENSG00000048052.25"/>
</dbReference>
<dbReference type="Ensembl" id="ENST00000417496.6">
    <molecule id="Q9UKV0-8"/>
    <property type="protein sequence ID" value="ENSP00000401669.2"/>
    <property type="gene ID" value="ENSG00000048052.25"/>
</dbReference>
<dbReference type="Ensembl" id="ENST00000428307.6">
    <molecule id="Q9UKV0-9"/>
    <property type="protein sequence ID" value="ENSP00000395655.2"/>
    <property type="gene ID" value="ENSG00000048052.25"/>
</dbReference>
<dbReference type="Ensembl" id="ENST00000432645.6">
    <molecule id="Q9UKV0-1"/>
    <property type="protein sequence ID" value="ENSP00000410337.2"/>
    <property type="gene ID" value="ENSG00000048052.25"/>
</dbReference>
<dbReference type="Ensembl" id="ENST00000441542.7">
    <molecule id="Q9UKV0-7"/>
    <property type="protein sequence ID" value="ENSP00000408617.2"/>
    <property type="gene ID" value="ENSG00000048052.25"/>
</dbReference>
<dbReference type="Ensembl" id="ENST00000456174.6">
    <molecule id="Q9UKV0-10"/>
    <property type="protein sequence ID" value="ENSP00000388568.2"/>
    <property type="gene ID" value="ENSG00000048052.25"/>
</dbReference>
<dbReference type="Ensembl" id="ENST00000524023.1">
    <molecule id="Q9UKV0-11"/>
    <property type="protein sequence ID" value="ENSP00000430036.1"/>
    <property type="gene ID" value="ENSG00000048052.25"/>
</dbReference>
<dbReference type="Ensembl" id="ENST00000686413.1">
    <molecule id="Q9UKV0-7"/>
    <property type="protein sequence ID" value="ENSP00000509161.1"/>
    <property type="gene ID" value="ENSG00000048052.25"/>
</dbReference>
<dbReference type="GeneID" id="9734"/>
<dbReference type="KEGG" id="hsa:9734"/>
<dbReference type="MANE-Select" id="ENST00000686413.1">
    <molecule id="Q9UKV0-7"/>
    <property type="protein sequence ID" value="ENSP00000509161.1"/>
    <property type="RefSeq nucleotide sequence ID" value="NM_178425.4"/>
    <property type="RefSeq protein sequence ID" value="NP_848512.1"/>
</dbReference>
<dbReference type="UCSC" id="uc003sud.2">
    <molecule id="Q9UKV0-1"/>
    <property type="organism name" value="human"/>
</dbReference>
<dbReference type="AGR" id="HGNC:14065"/>
<dbReference type="CTD" id="9734"/>
<dbReference type="DisGeNET" id="9734"/>
<dbReference type="GeneCards" id="HDAC9"/>
<dbReference type="HGNC" id="HGNC:14065">
    <property type="gene designation" value="HDAC9"/>
</dbReference>
<dbReference type="HPA" id="ENSG00000048052">
    <property type="expression patterns" value="Low tissue specificity"/>
</dbReference>
<dbReference type="MalaCards" id="HDAC9"/>
<dbReference type="MIM" id="606543">
    <property type="type" value="gene"/>
</dbReference>
<dbReference type="MIM" id="620457">
    <property type="type" value="phenotype"/>
</dbReference>
<dbReference type="neXtProt" id="NX_Q9UKV0"/>
<dbReference type="OpenTargets" id="ENSG00000048052"/>
<dbReference type="PharmGKB" id="PA38377"/>
<dbReference type="VEuPathDB" id="HostDB:ENSG00000048052"/>
<dbReference type="eggNOG" id="KOG1343">
    <property type="taxonomic scope" value="Eukaryota"/>
</dbReference>
<dbReference type="GeneTree" id="ENSGT00940000160307"/>
<dbReference type="HOGENOM" id="CLU_006530_2_0_1"/>
<dbReference type="InParanoid" id="Q9UKV0"/>
<dbReference type="OMA" id="FMQQQIL"/>
<dbReference type="OrthoDB" id="5232919at2759"/>
<dbReference type="PAN-GO" id="Q9UKV0">
    <property type="GO annotations" value="6 GO annotations based on evolutionary models"/>
</dbReference>
<dbReference type="PhylomeDB" id="Q9UKV0"/>
<dbReference type="TreeFam" id="TF106174"/>
<dbReference type="BRENDA" id="3.5.1.98">
    <property type="organism ID" value="2681"/>
</dbReference>
<dbReference type="PathwayCommons" id="Q9UKV0"/>
<dbReference type="Reactome" id="R-HSA-2122947">
    <property type="pathway name" value="NOTCH1 Intracellular Domain Regulates Transcription"/>
</dbReference>
<dbReference type="Reactome" id="R-HSA-2644606">
    <property type="pathway name" value="Constitutive Signaling by NOTCH1 PEST Domain Mutants"/>
</dbReference>
<dbReference type="Reactome" id="R-HSA-2894862">
    <property type="pathway name" value="Constitutive Signaling by NOTCH1 HD+PEST Domain Mutants"/>
</dbReference>
<dbReference type="Reactome" id="R-HSA-350054">
    <property type="pathway name" value="Notch-HLH transcription pathway"/>
</dbReference>
<dbReference type="SignaLink" id="Q9UKV0"/>
<dbReference type="SIGNOR" id="Q9UKV0"/>
<dbReference type="BioGRID-ORCS" id="9734">
    <property type="hits" value="23 hits in 1183 CRISPR screens"/>
</dbReference>
<dbReference type="ChiTaRS" id="HDAC9">
    <property type="organism name" value="human"/>
</dbReference>
<dbReference type="GeneWiki" id="HDAC9"/>
<dbReference type="GenomeRNAi" id="9734"/>
<dbReference type="Pharos" id="Q9UKV0">
    <property type="development level" value="Tclin"/>
</dbReference>
<dbReference type="PRO" id="PR:Q9UKV0"/>
<dbReference type="Proteomes" id="UP000005640">
    <property type="component" value="Chromosome 7"/>
</dbReference>
<dbReference type="RNAct" id="Q9UKV0">
    <property type="molecule type" value="protein"/>
</dbReference>
<dbReference type="Bgee" id="ENSG00000048052">
    <property type="expression patterns" value="Expressed in oocyte and 203 other cell types or tissues"/>
</dbReference>
<dbReference type="ExpressionAtlas" id="Q9UKV0">
    <property type="expression patterns" value="baseline and differential"/>
</dbReference>
<dbReference type="GO" id="GO:0005737">
    <property type="term" value="C:cytoplasm"/>
    <property type="evidence" value="ECO:0000314"/>
    <property type="project" value="UniProtKB"/>
</dbReference>
<dbReference type="GO" id="GO:0000118">
    <property type="term" value="C:histone deacetylase complex"/>
    <property type="evidence" value="ECO:0000318"/>
    <property type="project" value="GO_Central"/>
</dbReference>
<dbReference type="GO" id="GO:0035097">
    <property type="term" value="C:histone methyltransferase complex"/>
    <property type="evidence" value="ECO:0000250"/>
    <property type="project" value="UniProtKB"/>
</dbReference>
<dbReference type="GO" id="GO:0005654">
    <property type="term" value="C:nucleoplasm"/>
    <property type="evidence" value="ECO:0000304"/>
    <property type="project" value="Reactome"/>
</dbReference>
<dbReference type="GO" id="GO:0005634">
    <property type="term" value="C:nucleus"/>
    <property type="evidence" value="ECO:0000314"/>
    <property type="project" value="UniProtKB"/>
</dbReference>
<dbReference type="GO" id="GO:0005667">
    <property type="term" value="C:transcription regulator complex"/>
    <property type="evidence" value="ECO:0000314"/>
    <property type="project" value="BHF-UCL"/>
</dbReference>
<dbReference type="GO" id="GO:0140297">
    <property type="term" value="F:DNA-binding transcription factor binding"/>
    <property type="evidence" value="ECO:0000314"/>
    <property type="project" value="BHF-UCL"/>
</dbReference>
<dbReference type="GO" id="GO:0004407">
    <property type="term" value="F:histone deacetylase activity"/>
    <property type="evidence" value="ECO:0000314"/>
    <property type="project" value="BHF-UCL"/>
</dbReference>
<dbReference type="GO" id="GO:0042826">
    <property type="term" value="F:histone deacetylase binding"/>
    <property type="evidence" value="ECO:0000314"/>
    <property type="project" value="BHF-UCL"/>
</dbReference>
<dbReference type="GO" id="GO:0031078">
    <property type="term" value="F:histone H3K14 deacetylase activity, hydrolytic mechanism"/>
    <property type="evidence" value="ECO:0000250"/>
    <property type="project" value="ARUK-UCL"/>
</dbReference>
<dbReference type="GO" id="GO:0032129">
    <property type="term" value="F:histone H3K9 deacetylase activity, hydrolytic mechanism"/>
    <property type="evidence" value="ECO:0000250"/>
    <property type="project" value="ARUK-UCL"/>
</dbReference>
<dbReference type="GO" id="GO:0034739">
    <property type="term" value="F:histone H4K16 deacetylase activity, hydrolytic mechanism"/>
    <property type="evidence" value="ECO:0000314"/>
    <property type="project" value="ARUK-UCL"/>
</dbReference>
<dbReference type="GO" id="GO:0046872">
    <property type="term" value="F:metal ion binding"/>
    <property type="evidence" value="ECO:0007669"/>
    <property type="project" value="UniProtKB-KW"/>
</dbReference>
<dbReference type="GO" id="GO:0005080">
    <property type="term" value="F:protein kinase C binding"/>
    <property type="evidence" value="ECO:0000353"/>
    <property type="project" value="UniProtKB"/>
</dbReference>
<dbReference type="GO" id="GO:0033558">
    <property type="term" value="F:protein lysine deacetylase activity"/>
    <property type="evidence" value="ECO:0000314"/>
    <property type="project" value="BHF-UCL"/>
</dbReference>
<dbReference type="GO" id="GO:0061629">
    <property type="term" value="F:RNA polymerase II-specific DNA-binding transcription factor binding"/>
    <property type="evidence" value="ECO:0000314"/>
    <property type="project" value="BHF-UCL"/>
</dbReference>
<dbReference type="GO" id="GO:0003714">
    <property type="term" value="F:transcription corepressor activity"/>
    <property type="evidence" value="ECO:0000250"/>
    <property type="project" value="BHF-UCL"/>
</dbReference>
<dbReference type="GO" id="GO:0042113">
    <property type="term" value="P:B cell activation"/>
    <property type="evidence" value="ECO:0000304"/>
    <property type="project" value="UniProtKB"/>
</dbReference>
<dbReference type="GO" id="GO:0030183">
    <property type="term" value="P:B cell differentiation"/>
    <property type="evidence" value="ECO:0000304"/>
    <property type="project" value="UniProtKB"/>
</dbReference>
<dbReference type="GO" id="GO:0032869">
    <property type="term" value="P:cellular response to insulin stimulus"/>
    <property type="evidence" value="ECO:0000314"/>
    <property type="project" value="BHF-UCL"/>
</dbReference>
<dbReference type="GO" id="GO:0042632">
    <property type="term" value="P:cholesterol homeostasis"/>
    <property type="evidence" value="ECO:0000314"/>
    <property type="project" value="ARUK-UCL"/>
</dbReference>
<dbReference type="GO" id="GO:0040029">
    <property type="term" value="P:epigenetic regulation of gene expression"/>
    <property type="evidence" value="ECO:0000318"/>
    <property type="project" value="GO_Central"/>
</dbReference>
<dbReference type="GO" id="GO:0007507">
    <property type="term" value="P:heart development"/>
    <property type="evidence" value="ECO:0000250"/>
    <property type="project" value="BHF-UCL"/>
</dbReference>
<dbReference type="GO" id="GO:0006954">
    <property type="term" value="P:inflammatory response"/>
    <property type="evidence" value="ECO:0000304"/>
    <property type="project" value="UniProtKB"/>
</dbReference>
<dbReference type="GO" id="GO:0001818">
    <property type="term" value="P:negative regulation of cytokine production"/>
    <property type="evidence" value="ECO:0000314"/>
    <property type="project" value="ARUK-UCL"/>
</dbReference>
<dbReference type="GO" id="GO:0045892">
    <property type="term" value="P:negative regulation of DNA-templated transcription"/>
    <property type="evidence" value="ECO:0000314"/>
    <property type="project" value="BHF-UCL"/>
</dbReference>
<dbReference type="GO" id="GO:0045814">
    <property type="term" value="P:negative regulation of gene expression, epigenetic"/>
    <property type="evidence" value="ECO:0000314"/>
    <property type="project" value="BHF-UCL"/>
</dbReference>
<dbReference type="GO" id="GO:0000122">
    <property type="term" value="P:negative regulation of transcription by RNA polymerase II"/>
    <property type="evidence" value="ECO:0000314"/>
    <property type="project" value="MGI"/>
</dbReference>
<dbReference type="GO" id="GO:0034983">
    <property type="term" value="P:peptidyl-lysine deacetylation"/>
    <property type="evidence" value="ECO:0000314"/>
    <property type="project" value="BHF-UCL"/>
</dbReference>
<dbReference type="GO" id="GO:0090050">
    <property type="term" value="P:positive regulation of cell migration involved in sprouting angiogenesis"/>
    <property type="evidence" value="ECO:0000315"/>
    <property type="project" value="BHF-UCL"/>
</dbReference>
<dbReference type="GO" id="GO:0048742">
    <property type="term" value="P:regulation of skeletal muscle fiber development"/>
    <property type="evidence" value="ECO:0000250"/>
    <property type="project" value="UniProtKB"/>
</dbReference>
<dbReference type="GO" id="GO:0051153">
    <property type="term" value="P:regulation of striated muscle cell differentiation"/>
    <property type="evidence" value="ECO:0000250"/>
    <property type="project" value="UniProtKB"/>
</dbReference>
<dbReference type="CDD" id="cd10163">
    <property type="entry name" value="ClassIIa_HDAC9_Gln-rich-N"/>
    <property type="match status" value="1"/>
</dbReference>
<dbReference type="CDD" id="cd10009">
    <property type="entry name" value="HDAC9"/>
    <property type="match status" value="1"/>
</dbReference>
<dbReference type="FunFam" id="3.40.800.20:FF:000002">
    <property type="entry name" value="Histone deacetylase"/>
    <property type="match status" value="1"/>
</dbReference>
<dbReference type="Gene3D" id="6.10.250.1550">
    <property type="match status" value="1"/>
</dbReference>
<dbReference type="Gene3D" id="3.40.800.20">
    <property type="entry name" value="Histone deacetylase domain"/>
    <property type="match status" value="1"/>
</dbReference>
<dbReference type="InterPro" id="IPR046949">
    <property type="entry name" value="HDAC4/5/7/9"/>
</dbReference>
<dbReference type="InterPro" id="IPR000286">
    <property type="entry name" value="His_deacetylse"/>
</dbReference>
<dbReference type="InterPro" id="IPR023801">
    <property type="entry name" value="His_deacetylse_dom"/>
</dbReference>
<dbReference type="InterPro" id="IPR037138">
    <property type="entry name" value="His_deacetylse_dom_sf"/>
</dbReference>
<dbReference type="InterPro" id="IPR024643">
    <property type="entry name" value="Hist_deacetylase_Gln_rich_N"/>
</dbReference>
<dbReference type="InterPro" id="IPR023696">
    <property type="entry name" value="Ureohydrolase_dom_sf"/>
</dbReference>
<dbReference type="PANTHER" id="PTHR45364:SF11">
    <property type="entry name" value="HISTONE DEACETYLASE 9"/>
    <property type="match status" value="1"/>
</dbReference>
<dbReference type="PANTHER" id="PTHR45364">
    <property type="entry name" value="HISTONE DEACETYLASE 9-RELATED"/>
    <property type="match status" value="1"/>
</dbReference>
<dbReference type="Pfam" id="PF12203">
    <property type="entry name" value="HDAC4_Gln"/>
    <property type="match status" value="1"/>
</dbReference>
<dbReference type="Pfam" id="PF00850">
    <property type="entry name" value="Hist_deacetyl"/>
    <property type="match status" value="1"/>
</dbReference>
<dbReference type="PIRSF" id="PIRSF037911">
    <property type="entry name" value="HDAC_II_euk"/>
    <property type="match status" value="1"/>
</dbReference>
<dbReference type="PRINTS" id="PR01270">
    <property type="entry name" value="HDASUPER"/>
</dbReference>
<dbReference type="SUPFAM" id="SSF52768">
    <property type="entry name" value="Arginase/deacetylase"/>
    <property type="match status" value="1"/>
</dbReference>
<accession>Q9UKV0</accession>
<accession>A7E2F3</accession>
<accession>B7Z4I4</accession>
<accession>B7Z917</accession>
<accession>B7Z928</accession>
<accession>B7Z940</accession>
<accession>C9JS87</accession>
<accession>E7EX34</accession>
<accession>F8W9E0</accession>
<accession>O94845</accession>
<accession>O95028</accession>
<accession>Q2M2R6</accession>
<accession>Q86SL1</accession>
<accession>Q86US3</accession>
<evidence type="ECO:0000250" key="1"/>
<evidence type="ECO:0000250" key="2">
    <source>
        <dbReference type="UniProtKB" id="Q99N13"/>
    </source>
</evidence>
<evidence type="ECO:0000256" key="3">
    <source>
        <dbReference type="SAM" id="MobiDB-lite"/>
    </source>
</evidence>
<evidence type="ECO:0000269" key="4">
    <source>
    </source>
</evidence>
<evidence type="ECO:0000269" key="5">
    <source>
    </source>
</evidence>
<evidence type="ECO:0000269" key="6">
    <source>
    </source>
</evidence>
<evidence type="ECO:0000269" key="7">
    <source>
    </source>
</evidence>
<evidence type="ECO:0000269" key="8">
    <source>
    </source>
</evidence>
<evidence type="ECO:0000269" key="9">
    <source>
    </source>
</evidence>
<evidence type="ECO:0000269" key="10">
    <source>
    </source>
</evidence>
<evidence type="ECO:0000269" key="11">
    <source>
    </source>
</evidence>
<evidence type="ECO:0000269" key="12">
    <source>
    </source>
</evidence>
<evidence type="ECO:0000269" key="13">
    <source>
    </source>
</evidence>
<evidence type="ECO:0000269" key="14">
    <source>
    </source>
</evidence>
<evidence type="ECO:0000303" key="15">
    <source>
    </source>
</evidence>
<evidence type="ECO:0000303" key="16">
    <source>
    </source>
</evidence>
<evidence type="ECO:0000303" key="17">
    <source>
    </source>
</evidence>
<evidence type="ECO:0000303" key="18">
    <source>
    </source>
</evidence>
<evidence type="ECO:0000303" key="19">
    <source>
    </source>
</evidence>
<evidence type="ECO:0000303" key="20">
    <source>
    </source>
</evidence>
<evidence type="ECO:0000303" key="21">
    <source>
    </source>
</evidence>
<evidence type="ECO:0000305" key="22"/>
<evidence type="ECO:0007744" key="23">
    <source>
    </source>
</evidence>
<evidence type="ECO:0007829" key="24">
    <source>
        <dbReference type="PDB" id="8Q9N"/>
    </source>
</evidence>
<feature type="chain" id="PRO_0000114710" description="Histone deacetylase 9">
    <location>
        <begin position="1"/>
        <end position="1011"/>
    </location>
</feature>
<feature type="region of interest" description="Interaction with CTBP1" evidence="1">
    <location>
        <begin position="23"/>
        <end position="27"/>
    </location>
</feature>
<feature type="region of interest" description="Disordered" evidence="3">
    <location>
        <begin position="110"/>
        <end position="139"/>
    </location>
</feature>
<feature type="region of interest" description="Interaction with MEF2" evidence="1">
    <location>
        <begin position="136"/>
        <end position="154"/>
    </location>
</feature>
<feature type="region of interest" description="Interaction with MAPK10" evidence="1">
    <location>
        <begin position="175"/>
        <end position="343"/>
    </location>
</feature>
<feature type="region of interest" description="Disordered" evidence="3">
    <location>
        <begin position="183"/>
        <end position="249"/>
    </location>
</feature>
<feature type="region of interest" description="Interaction with ETV6" evidence="9">
    <location>
        <begin position="218"/>
        <end position="261"/>
    </location>
</feature>
<feature type="region of interest" description="Disordered" evidence="3">
    <location>
        <begin position="262"/>
        <end position="304"/>
    </location>
</feature>
<feature type="region of interest" description="Disordered" evidence="3">
    <location>
        <begin position="494"/>
        <end position="536"/>
    </location>
</feature>
<feature type="region of interest" description="Histone deacetylase">
    <location>
        <begin position="631"/>
        <end position="978"/>
    </location>
</feature>
<feature type="compositionally biased region" description="Polar residues" evidence="3">
    <location>
        <begin position="185"/>
        <end position="199"/>
    </location>
</feature>
<feature type="compositionally biased region" description="Basic and acidic residues" evidence="3">
    <location>
        <begin position="208"/>
        <end position="219"/>
    </location>
</feature>
<feature type="compositionally biased region" description="Basic and acidic residues" evidence="3">
    <location>
        <begin position="233"/>
        <end position="248"/>
    </location>
</feature>
<feature type="compositionally biased region" description="Low complexity" evidence="3">
    <location>
        <begin position="262"/>
        <end position="285"/>
    </location>
</feature>
<feature type="compositionally biased region" description="Polar residues" evidence="3">
    <location>
        <begin position="522"/>
        <end position="532"/>
    </location>
</feature>
<feature type="active site" evidence="1">
    <location>
        <position position="783"/>
    </location>
</feature>
<feature type="binding site" evidence="1">
    <location>
        <position position="646"/>
    </location>
    <ligand>
        <name>Zn(2+)</name>
        <dbReference type="ChEBI" id="CHEBI:29105"/>
    </ligand>
</feature>
<feature type="binding site" evidence="1">
    <location>
        <position position="648"/>
    </location>
    <ligand>
        <name>Zn(2+)</name>
        <dbReference type="ChEBI" id="CHEBI:29105"/>
    </ligand>
</feature>
<feature type="binding site" evidence="1">
    <location>
        <position position="654"/>
    </location>
    <ligand>
        <name>Zn(2+)</name>
        <dbReference type="ChEBI" id="CHEBI:29105"/>
    </ligand>
</feature>
<feature type="binding site" evidence="1">
    <location>
        <position position="731"/>
    </location>
    <ligand>
        <name>Zn(2+)</name>
        <dbReference type="ChEBI" id="CHEBI:29105"/>
    </ligand>
</feature>
<feature type="modified residue" description="Phosphoserine" evidence="23">
    <location>
        <position position="22"/>
    </location>
</feature>
<feature type="modified residue" description="Phosphoserine" evidence="2">
    <location>
        <position position="220"/>
    </location>
</feature>
<feature type="modified residue" description="Phosphoserine" evidence="2">
    <location>
        <position position="240"/>
    </location>
</feature>
<feature type="modified residue" description="Phosphoserine" evidence="2">
    <location>
        <position position="451"/>
    </location>
</feature>
<feature type="modified residue" description="Phosphoserine" evidence="2">
    <location>
        <position position="554"/>
    </location>
</feature>
<feature type="splice variant" id="VSP_046827" description="In isoform 10 and isoform 11." evidence="19">
    <location>
        <begin position="1"/>
        <end position="31"/>
    </location>
</feature>
<feature type="splice variant" id="VSP_043428" description="In isoform 8." evidence="19">
    <original>M</original>
    <variation>MMSSPAQPDLMWNLVPWVLFCGCCRIFPDGVAGREQLLAQQRM</variation>
    <location>
        <position position="1"/>
    </location>
</feature>
<feature type="splice variant" id="VSP_023766" description="In isoform 6, isoform 7 and isoform 10." evidence="17 19 20">
    <original>K</original>
    <variation>KLQQ</variation>
    <location>
        <position position="88"/>
    </location>
</feature>
<feature type="splice variant" id="VSP_046828" description="In isoform 11." evidence="19">
    <location>
        <begin position="177"/>
        <end position="178"/>
    </location>
</feature>
<feature type="splice variant" id="VSP_023767" description="In isoform 6, isoform 8, isoform 9 and isoform 11." evidence="19 20">
    <location>
        <begin position="218"/>
        <end position="261"/>
    </location>
</feature>
<feature type="splice variant" id="VSP_002082" description="In isoform 2." evidence="15">
    <location>
        <begin position="487"/>
        <end position="574"/>
    </location>
</feature>
<feature type="splice variant" id="VSP_002083" description="In isoform 3, isoform 8, isoform 9, isoform 10 and isoform 11." evidence="19 20 21">
    <original>PFLEPTHTRALSVRQA</original>
    <variation>VIGKDLAPGFVIKVII</variation>
    <location>
        <begin position="575"/>
        <end position="590"/>
    </location>
</feature>
<feature type="splice variant" id="VSP_002084" description="In isoform 3, isoform 8, isoform 9, isoform 10 and isoform 11." evidence="19 20 21">
    <location>
        <begin position="591"/>
        <end position="1011"/>
    </location>
</feature>
<feature type="splice variant" id="VSP_002085" description="In isoform 4." evidence="16">
    <original>GTGLGEGYNINIAWTGGLD</original>
    <variation>RFISLEPHFYLYLSGNCIA</variation>
    <location>
        <begin position="861"/>
        <end position="879"/>
    </location>
</feature>
<feature type="splice variant" id="VSP_002086" description="In isoform 4." evidence="16">
    <location>
        <begin position="880"/>
        <end position="1011"/>
    </location>
</feature>
<feature type="splice variant" id="VSP_023768" description="In isoform 5, isoform 6 and isoform 7." evidence="17 18 20">
    <original>MSLKFS</original>
    <variation>KYWKSVRMVAVPRGCALAGAQLQEETETVSALASLTVDVEQPFAQEDSRTAGEPMEEEPAL</variation>
    <location>
        <begin position="1006"/>
        <end position="1011"/>
    </location>
</feature>
<feature type="sequence variant" id="VAR_064719" description="Found in a renal cell carcinoma sample; somatic mutation; dbSNP:rs1333490692." evidence="13">
    <original>P</original>
    <variation>T</variation>
    <location>
        <position position="921"/>
    </location>
</feature>
<feature type="sequence conflict" description="In Ref. 5; BAH12570." evidence="22" ref="5">
    <original>V</original>
    <variation>A</variation>
    <location>
        <position position="16"/>
    </location>
</feature>
<feature type="sequence conflict" description="In Ref. 9; AAF04254." evidence="22" ref="9">
    <original>L</original>
    <variation>I</variation>
    <location>
        <position position="99"/>
    </location>
</feature>
<feature type="sequence conflict" description="In Ref. 5; BAH14164." evidence="22" ref="5">
    <original>S</original>
    <variation>I</variation>
    <location>
        <position position="153"/>
    </location>
</feature>
<feature type="sequence conflict" description="In Ref. 5; BAH14176." evidence="22" ref="5">
    <original>S</original>
    <variation>F</variation>
    <location>
        <position position="315"/>
    </location>
</feature>
<feature type="sequence conflict" description="In Ref. 5; BAH14164." evidence="22" ref="5">
    <original>L</original>
    <variation>M</variation>
    <location>
        <position position="332"/>
    </location>
</feature>
<feature type="sequence conflict" description="In Ref. 5; BAH14164." evidence="22" ref="5">
    <original>V</original>
    <variation>F</variation>
    <location>
        <position position="416"/>
    </location>
</feature>
<feature type="sequence conflict" description="In Ref. 9; AAF04254." evidence="22" ref="9">
    <original>T</original>
    <variation>P</variation>
    <location>
        <position position="437"/>
    </location>
</feature>
<feature type="sequence conflict" description="In Ref. 9; AAF04254." evidence="22" ref="9">
    <original>HQCV</original>
    <variation>KPNS</variation>
    <location>
        <begin position="644"/>
        <end position="647"/>
    </location>
</feature>
<feature type="sequence conflict" description="In Ref. 3; AAO27363." evidence="22" ref="3">
    <original>H</original>
    <variation>R</variation>
    <location>
        <position position="746"/>
    </location>
</feature>
<feature type="helix" evidence="24">
    <location>
        <begin position="142"/>
        <end position="153"/>
    </location>
</feature>
<sequence>MHSMISSVDVKSEVPVGLEPISPLDLRTDLRMMMPVVDPVVREKQLQQELLLIQQQQQIQKQLLIAEFQKQHENLTRQHQAQLQEHIKELLAIKQQQELLEKEQKLEQQRQEQEVERHRREQQLPPLRGKDRGRERAVASTEVKQKLQEFLLSKSATKDTPTNGKNHSVSRHPKLWYTAAHHTSLDQSSPPLSGTSPSYKYTLPGAQDAKDDFPLRKTASEPNLKVRSRLKQKVAERRSSPLLRRKDGNVVTSFKKRMFEVTESSVSSSSPGSGPSSPNNGPTGSVTENETSVLPPTPHAEQMVSQQRILIHEDSMNLLSLYTSPSLPNITLGLPAVPSQLNASNSLKEKQKCETQTLRQGVPLPGQYGGSIPASSSHPHVTLEGKPPNSSHQALLQHLLLKEQMRQQKLLVAGGVPLHPQSPLATKERISPGIRGTHKLPRHRPLNRTQSAPLPQSTLAQLVIQQQHQQFLEKQKQYQQQIHMNKLLSKSIEQLKQPGSHLEEAEEELQGDQAMQEDRAPSSGNSTRSDSSACVDDTLGQVGAVKVKEEPVDSDEDAQIQEMESGEQAAFMQQPFLEPTHTRALSVRQAPLAAVGMDGLEKHRLVSRTHSSPAASVLPHPAMDRPLQPGSATGIAYDPLMLKHQCVCGNSTTHPEHAGRIQSIWSRLQETGLLNKCERIQGRKASLEEIQLVHSEHHSLLYGTNPLDGQKLDPRILLGDDSQKFFSSLPCGGLGVDSDTIWNELHSSGAARMAVGCVIELASKVASGELKNGFAVVRPPGHHAEESTAMGFCFFNSVAITAKYLRDQLNISKILIVDLDVHHGNGTQQAFYADPSILYISLHRYDEGNFFPGSGAPNEVGTGLGEGYNINIAWTGGLDPPMGDVEYLEAFRTIVKPVAKEFDPDMVLVSAGFDALEGHTPPLGGYKVTAKCFGHLTKQLMTLADGRVVLALEGGHDLTAICDASEACVNALLGNELEPLAEDILHQSPNMNAVISLQKIIEIQSMSLKFS</sequence>
<protein>
    <recommendedName>
        <fullName>Histone deacetylase 9</fullName>
        <shortName>HD9</shortName>
        <ecNumber evidence="7">3.5.1.98</ecNumber>
    </recommendedName>
    <alternativeName>
        <fullName>Histone deacetylase 7B</fullName>
        <shortName>HD7</shortName>
        <shortName>HD7b</shortName>
    </alternativeName>
    <alternativeName>
        <fullName>Histone deacetylase-related protein</fullName>
    </alternativeName>
    <alternativeName>
        <fullName>MEF2-interacting transcription repressor MITR</fullName>
    </alternativeName>
</protein>
<organism>
    <name type="scientific">Homo sapiens</name>
    <name type="common">Human</name>
    <dbReference type="NCBI Taxonomy" id="9606"/>
    <lineage>
        <taxon>Eukaryota</taxon>
        <taxon>Metazoa</taxon>
        <taxon>Chordata</taxon>
        <taxon>Craniata</taxon>
        <taxon>Vertebrata</taxon>
        <taxon>Euteleostomi</taxon>
        <taxon>Mammalia</taxon>
        <taxon>Eutheria</taxon>
        <taxon>Euarchontoglires</taxon>
        <taxon>Primates</taxon>
        <taxon>Haplorrhini</taxon>
        <taxon>Catarrhini</taxon>
        <taxon>Hominidae</taxon>
        <taxon>Homo</taxon>
    </lineage>
</organism>
<reference key="1">
    <citation type="journal article" date="2001" name="Proc. Natl. Acad. Sci. U.S.A.">
        <title>Cloning and characterization of a histone deacetylase, HDAC9.</title>
        <authorList>
            <person name="Zhou X."/>
            <person name="Marks P.A."/>
            <person name="Rifkind R.A."/>
            <person name="Richon V.M."/>
        </authorList>
    </citation>
    <scope>NUCLEOTIDE SEQUENCE [MRNA] (ISOFORMS 1 AND 4)</scope>
    <scope>TISSUE SPECIFICITY</scope>
    <scope>INTERACTION WITH MEF2</scope>
    <scope>FUNCTION</scope>
    <scope>CATALYTIC ACTIVITY</scope>
    <scope>ACTIVITY REGULATION</scope>
    <source>
        <tissue>Brain</tissue>
    </source>
</reference>
<reference key="2">
    <citation type="journal article" date="2003" name="Genomics">
        <title>Molecular characterization of a familial translocation implicates disruption of HDAC9 and possible position effect on TGFbeta2 in the pathogenesis of Peters' anomaly.</title>
        <authorList>
            <person name="David D."/>
            <person name="Cardoso J."/>
            <person name="Marques B."/>
            <person name="Marques R."/>
            <person name="Silva E.D."/>
            <person name="Santos H."/>
            <person name="Boavida M.G."/>
        </authorList>
    </citation>
    <scope>NUCLEOTIDE SEQUENCE [MRNA] (ISOFORM 5)</scope>
    <scope>TISSUE SPECIFICITY</scope>
    <scope>CHROMOSOMAL TRANSLOCATION WITH TGFB2</scope>
    <source>
        <tissue>Lens</tissue>
    </source>
</reference>
<reference key="3">
    <citation type="journal article" date="2003" name="J. Biol. Chem.">
        <title>The histone deacetylase 9 gene encodes multiple protein isoforms.</title>
        <authorList>
            <person name="Petrie K."/>
            <person name="Guidez F."/>
            <person name="Howell L."/>
            <person name="Healy L."/>
            <person name="Waxman S."/>
            <person name="Greaves M."/>
            <person name="Zelent A."/>
        </authorList>
    </citation>
    <scope>NUCLEOTIDE SEQUENCE [MRNA] (ISOFORM 7)</scope>
    <scope>TISSUE SPECIFICITY</scope>
    <scope>ALTERNATIVE SPLICING (ISOFORMS 3; 6 AND 7)</scope>
    <scope>INTERACTION WITH ETV6; NCOR1 AND BCL6</scope>
    <scope>FUNCTION</scope>
    <scope>SUBCELLULAR LOCATION</scope>
    <scope>SUMOYLATION</scope>
    <source>
        <tissue>Brain</tissue>
    </source>
</reference>
<reference key="4">
    <citation type="journal article" date="1998" name="DNA Res.">
        <title>Prediction of the coding sequences of unidentified human genes. XI. The complete sequences of 100 new cDNA clones from brain which code for large proteins in vitro.</title>
        <authorList>
            <person name="Nagase T."/>
            <person name="Ishikawa K."/>
            <person name="Suyama M."/>
            <person name="Kikuno R."/>
            <person name="Miyajima N."/>
            <person name="Tanaka A."/>
            <person name="Kotani H."/>
            <person name="Nomura N."/>
            <person name="Ohara O."/>
        </authorList>
    </citation>
    <scope>NUCLEOTIDE SEQUENCE [LARGE SCALE MRNA] (ISOFORM 3)</scope>
    <source>
        <tissue>Brain</tissue>
    </source>
</reference>
<reference key="5">
    <citation type="journal article" date="2004" name="Nat. Genet.">
        <title>Complete sequencing and characterization of 21,243 full-length human cDNAs.</title>
        <authorList>
            <person name="Ota T."/>
            <person name="Suzuki Y."/>
            <person name="Nishikawa T."/>
            <person name="Otsuki T."/>
            <person name="Sugiyama T."/>
            <person name="Irie R."/>
            <person name="Wakamatsu A."/>
            <person name="Hayashi K."/>
            <person name="Sato H."/>
            <person name="Nagai K."/>
            <person name="Kimura K."/>
            <person name="Makita H."/>
            <person name="Sekine M."/>
            <person name="Obayashi M."/>
            <person name="Nishi T."/>
            <person name="Shibahara T."/>
            <person name="Tanaka T."/>
            <person name="Ishii S."/>
            <person name="Yamamoto J."/>
            <person name="Saito K."/>
            <person name="Kawai Y."/>
            <person name="Isono Y."/>
            <person name="Nakamura Y."/>
            <person name="Nagahari K."/>
            <person name="Murakami K."/>
            <person name="Yasuda T."/>
            <person name="Iwayanagi T."/>
            <person name="Wagatsuma M."/>
            <person name="Shiratori A."/>
            <person name="Sudo H."/>
            <person name="Hosoiri T."/>
            <person name="Kaku Y."/>
            <person name="Kodaira H."/>
            <person name="Kondo H."/>
            <person name="Sugawara M."/>
            <person name="Takahashi M."/>
            <person name="Kanda K."/>
            <person name="Yokoi T."/>
            <person name="Furuya T."/>
            <person name="Kikkawa E."/>
            <person name="Omura Y."/>
            <person name="Abe K."/>
            <person name="Kamihara K."/>
            <person name="Katsuta N."/>
            <person name="Sato K."/>
            <person name="Tanikawa M."/>
            <person name="Yamazaki M."/>
            <person name="Ninomiya K."/>
            <person name="Ishibashi T."/>
            <person name="Yamashita H."/>
            <person name="Murakawa K."/>
            <person name="Fujimori K."/>
            <person name="Tanai H."/>
            <person name="Kimata M."/>
            <person name="Watanabe M."/>
            <person name="Hiraoka S."/>
            <person name="Chiba Y."/>
            <person name="Ishida S."/>
            <person name="Ono Y."/>
            <person name="Takiguchi S."/>
            <person name="Watanabe S."/>
            <person name="Yosida M."/>
            <person name="Hotuta T."/>
            <person name="Kusano J."/>
            <person name="Kanehori K."/>
            <person name="Takahashi-Fujii A."/>
            <person name="Hara H."/>
            <person name="Tanase T.-O."/>
            <person name="Nomura Y."/>
            <person name="Togiya S."/>
            <person name="Komai F."/>
            <person name="Hara R."/>
            <person name="Takeuchi K."/>
            <person name="Arita M."/>
            <person name="Imose N."/>
            <person name="Musashino K."/>
            <person name="Yuuki H."/>
            <person name="Oshima A."/>
            <person name="Sasaki N."/>
            <person name="Aotsuka S."/>
            <person name="Yoshikawa Y."/>
            <person name="Matsunawa H."/>
            <person name="Ichihara T."/>
            <person name="Shiohata N."/>
            <person name="Sano S."/>
            <person name="Moriya S."/>
            <person name="Momiyama H."/>
            <person name="Satoh N."/>
            <person name="Takami S."/>
            <person name="Terashima Y."/>
            <person name="Suzuki O."/>
            <person name="Nakagawa S."/>
            <person name="Senoh A."/>
            <person name="Mizoguchi H."/>
            <person name="Goto Y."/>
            <person name="Shimizu F."/>
            <person name="Wakebe H."/>
            <person name="Hishigaki H."/>
            <person name="Watanabe T."/>
            <person name="Sugiyama A."/>
            <person name="Takemoto M."/>
            <person name="Kawakami B."/>
            <person name="Yamazaki M."/>
            <person name="Watanabe K."/>
            <person name="Kumagai A."/>
            <person name="Itakura S."/>
            <person name="Fukuzumi Y."/>
            <person name="Fujimori Y."/>
            <person name="Komiyama M."/>
            <person name="Tashiro H."/>
            <person name="Tanigami A."/>
            <person name="Fujiwara T."/>
            <person name="Ono T."/>
            <person name="Yamada K."/>
            <person name="Fujii Y."/>
            <person name="Ozaki K."/>
            <person name="Hirao M."/>
            <person name="Ohmori Y."/>
            <person name="Kawabata A."/>
            <person name="Hikiji T."/>
            <person name="Kobatake N."/>
            <person name="Inagaki H."/>
            <person name="Ikema Y."/>
            <person name="Okamoto S."/>
            <person name="Okitani R."/>
            <person name="Kawakami T."/>
            <person name="Noguchi S."/>
            <person name="Itoh T."/>
            <person name="Shigeta K."/>
            <person name="Senba T."/>
            <person name="Matsumura K."/>
            <person name="Nakajima Y."/>
            <person name="Mizuno T."/>
            <person name="Morinaga M."/>
            <person name="Sasaki M."/>
            <person name="Togashi T."/>
            <person name="Oyama M."/>
            <person name="Hata H."/>
            <person name="Watanabe M."/>
            <person name="Komatsu T."/>
            <person name="Mizushima-Sugano J."/>
            <person name="Satoh T."/>
            <person name="Shirai Y."/>
            <person name="Takahashi Y."/>
            <person name="Nakagawa K."/>
            <person name="Okumura K."/>
            <person name="Nagase T."/>
            <person name="Nomura N."/>
            <person name="Kikuchi H."/>
            <person name="Masuho Y."/>
            <person name="Yamashita R."/>
            <person name="Nakai K."/>
            <person name="Yada T."/>
            <person name="Nakamura Y."/>
            <person name="Ohara O."/>
            <person name="Isogai T."/>
            <person name="Sugano S."/>
        </authorList>
    </citation>
    <scope>NUCLEOTIDE SEQUENCE [LARGE SCALE MRNA] (ISOFORMS 8; 9; 10 AND 11)</scope>
    <source>
        <tissue>Brain</tissue>
        <tissue>Trachea</tissue>
    </source>
</reference>
<reference key="6">
    <citation type="journal article" date="2003" name="Nature">
        <title>The DNA sequence of human chromosome 7.</title>
        <authorList>
            <person name="Hillier L.W."/>
            <person name="Fulton R.S."/>
            <person name="Fulton L.A."/>
            <person name="Graves T.A."/>
            <person name="Pepin K.H."/>
            <person name="Wagner-McPherson C."/>
            <person name="Layman D."/>
            <person name="Maas J."/>
            <person name="Jaeger S."/>
            <person name="Walker R."/>
            <person name="Wylie K."/>
            <person name="Sekhon M."/>
            <person name="Becker M.C."/>
            <person name="O'Laughlin M.D."/>
            <person name="Schaller M.E."/>
            <person name="Fewell G.A."/>
            <person name="Delehaunty K.D."/>
            <person name="Miner T.L."/>
            <person name="Nash W.E."/>
            <person name="Cordes M."/>
            <person name="Du H."/>
            <person name="Sun H."/>
            <person name="Edwards J."/>
            <person name="Bradshaw-Cordum H."/>
            <person name="Ali J."/>
            <person name="Andrews S."/>
            <person name="Isak A."/>
            <person name="Vanbrunt A."/>
            <person name="Nguyen C."/>
            <person name="Du F."/>
            <person name="Lamar B."/>
            <person name="Courtney L."/>
            <person name="Kalicki J."/>
            <person name="Ozersky P."/>
            <person name="Bielicki L."/>
            <person name="Scott K."/>
            <person name="Holmes A."/>
            <person name="Harkins R."/>
            <person name="Harris A."/>
            <person name="Strong C.M."/>
            <person name="Hou S."/>
            <person name="Tomlinson C."/>
            <person name="Dauphin-Kohlberg S."/>
            <person name="Kozlowicz-Reilly A."/>
            <person name="Leonard S."/>
            <person name="Rohlfing T."/>
            <person name="Rock S.M."/>
            <person name="Tin-Wollam A.-M."/>
            <person name="Abbott A."/>
            <person name="Minx P."/>
            <person name="Maupin R."/>
            <person name="Strowmatt C."/>
            <person name="Latreille P."/>
            <person name="Miller N."/>
            <person name="Johnson D."/>
            <person name="Murray J."/>
            <person name="Woessner J.P."/>
            <person name="Wendl M.C."/>
            <person name="Yang S.-P."/>
            <person name="Schultz B.R."/>
            <person name="Wallis J.W."/>
            <person name="Spieth J."/>
            <person name="Bieri T.A."/>
            <person name="Nelson J.O."/>
            <person name="Berkowicz N."/>
            <person name="Wohldmann P.E."/>
            <person name="Cook L.L."/>
            <person name="Hickenbotham M.T."/>
            <person name="Eldred J."/>
            <person name="Williams D."/>
            <person name="Bedell J.A."/>
            <person name="Mardis E.R."/>
            <person name="Clifton S.W."/>
            <person name="Chissoe S.L."/>
            <person name="Marra M.A."/>
            <person name="Raymond C."/>
            <person name="Haugen E."/>
            <person name="Gillett W."/>
            <person name="Zhou Y."/>
            <person name="James R."/>
            <person name="Phelps K."/>
            <person name="Iadanoto S."/>
            <person name="Bubb K."/>
            <person name="Simms E."/>
            <person name="Levy R."/>
            <person name="Clendenning J."/>
            <person name="Kaul R."/>
            <person name="Kent W.J."/>
            <person name="Furey T.S."/>
            <person name="Baertsch R.A."/>
            <person name="Brent M.R."/>
            <person name="Keibler E."/>
            <person name="Flicek P."/>
            <person name="Bork P."/>
            <person name="Suyama M."/>
            <person name="Bailey J.A."/>
            <person name="Portnoy M.E."/>
            <person name="Torrents D."/>
            <person name="Chinwalla A.T."/>
            <person name="Gish W.R."/>
            <person name="Eddy S.R."/>
            <person name="McPherson J.D."/>
            <person name="Olson M.V."/>
            <person name="Eichler E.E."/>
            <person name="Green E.D."/>
            <person name="Waterston R.H."/>
            <person name="Wilson R.K."/>
        </authorList>
    </citation>
    <scope>NUCLEOTIDE SEQUENCE [LARGE SCALE GENOMIC DNA]</scope>
</reference>
<reference key="7">
    <citation type="submission" date="2005-07" db="EMBL/GenBank/DDBJ databases">
        <authorList>
            <person name="Mural R.J."/>
            <person name="Istrail S."/>
            <person name="Sutton G.G."/>
            <person name="Florea L."/>
            <person name="Halpern A.L."/>
            <person name="Mobarry C.M."/>
            <person name="Lippert R."/>
            <person name="Walenz B."/>
            <person name="Shatkay H."/>
            <person name="Dew I."/>
            <person name="Miller J.R."/>
            <person name="Flanigan M.J."/>
            <person name="Edwards N.J."/>
            <person name="Bolanos R."/>
            <person name="Fasulo D."/>
            <person name="Halldorsson B.V."/>
            <person name="Hannenhalli S."/>
            <person name="Turner R."/>
            <person name="Yooseph S."/>
            <person name="Lu F."/>
            <person name="Nusskern D.R."/>
            <person name="Shue B.C."/>
            <person name="Zheng X.H."/>
            <person name="Zhong F."/>
            <person name="Delcher A.L."/>
            <person name="Huson D.H."/>
            <person name="Kravitz S.A."/>
            <person name="Mouchard L."/>
            <person name="Reinert K."/>
            <person name="Remington K.A."/>
            <person name="Clark A.G."/>
            <person name="Waterman M.S."/>
            <person name="Eichler E.E."/>
            <person name="Adams M.D."/>
            <person name="Hunkapiller M.W."/>
            <person name="Myers E.W."/>
            <person name="Venter J.C."/>
        </authorList>
    </citation>
    <scope>NUCLEOTIDE SEQUENCE [LARGE SCALE GENOMIC DNA]</scope>
</reference>
<reference key="8">
    <citation type="journal article" date="2004" name="Genome Res.">
        <title>The status, quality, and expansion of the NIH full-length cDNA project: the Mammalian Gene Collection (MGC).</title>
        <authorList>
            <consortium name="The MGC Project Team"/>
        </authorList>
    </citation>
    <scope>NUCLEOTIDE SEQUENCE [LARGE SCALE MRNA] (ISOFORM 3)</scope>
    <scope>NUCLEOTIDE SEQUENCE [LARGE SCALE MRNA] OF 2-1011 (ISOFORM 6)</scope>
</reference>
<reference key="9">
    <citation type="journal article" date="1999" name="Mol. Cell. Biol.">
        <title>HDAC4, a human histone deacetylase related to yeast HDA1, is a transcriptional corepressor.</title>
        <authorList>
            <person name="Wang A.H."/>
            <person name="Bertos N.R."/>
            <person name="Vezmar M."/>
            <person name="Pelletier N."/>
            <person name="Crosato M."/>
            <person name="Heng H.H."/>
            <person name="Th'ng J."/>
            <person name="Han J."/>
            <person name="Yang X.-J."/>
        </authorList>
    </citation>
    <scope>NUCLEOTIDE SEQUENCE [MRNA] OF 99-650 (ISOFORM 2)</scope>
    <source>
        <tissue>Brain</tissue>
    </source>
</reference>
<reference key="10">
    <citation type="journal article" date="1999" name="EMBO J.">
        <title>MEF-2 function is modified by a novel co-repressor, MITR.</title>
        <authorList>
            <person name="Sparrow D.B."/>
            <person name="Miska E.A."/>
            <person name="Langley E."/>
            <person name="Reynaud-Deonauth S."/>
            <person name="Kotecha S."/>
            <person name="Towers N."/>
            <person name="Spohr G."/>
            <person name="Kouzarides T."/>
            <person name="Mohun T.J."/>
        </authorList>
    </citation>
    <scope>IDENTIFICATION (ISOFORM 3)</scope>
    <scope>INTERACTION WITH HDAC1</scope>
    <scope>FUNCTION</scope>
</reference>
<reference key="11">
    <citation type="journal article" date="2000" name="Proc. Natl. Acad. Sci. U.S.A.">
        <title>Identification of a transcriptional repressor related to the noncatalytic domain of histone deacetylases 4 and 5.</title>
        <authorList>
            <person name="Zhou X."/>
            <person name="Richon V.M."/>
            <person name="Rifkind R.A."/>
            <person name="Marks P.A."/>
        </authorList>
    </citation>
    <scope>IDENTIFICATION (ISOFORM 3)</scope>
    <scope>TISSUE SPECIFICITY</scope>
    <scope>INTERACTION WITH HDAC1 AND HDAC3</scope>
    <scope>FUNCTION</scope>
</reference>
<reference key="12">
    <citation type="journal article" date="1999" name="EMBO J.">
        <title>HDAC4 deacetylase associates with and represses the MEF2 transcription factor.</title>
        <authorList>
            <person name="Miska E.A."/>
            <person name="Karlsson C."/>
            <person name="Langley E."/>
            <person name="Nielsen S.J."/>
            <person name="Pines J."/>
            <person name="Kouzarides T."/>
        </authorList>
    </citation>
    <scope>INTERACTION WITH MEF2</scope>
</reference>
<reference key="13">
    <citation type="journal article" date="2002" name="EMBO J.">
        <title>The SUMO E3 ligase RanBP2 promotes modification of the HDAC4 deacetylase.</title>
        <authorList>
            <person name="Kirsh O."/>
            <person name="Seeler J.-S."/>
            <person name="Pichler A."/>
            <person name="Gast A."/>
            <person name="Mueller S."/>
            <person name="Miska E."/>
            <person name="Mathieu M."/>
            <person name="Harel-Bellan A."/>
            <person name="Kouzarides T."/>
            <person name="Melchior F."/>
            <person name="Dejean A."/>
        </authorList>
    </citation>
    <scope>SUMOYLATION</scope>
</reference>
<reference key="14">
    <citation type="journal article" date="2006" name="Mol. Cell. Biol.">
        <title>Neuroprotection by histone deacetylase-related protein.</title>
        <authorList>
            <person name="Morrison B.E."/>
            <person name="Majdzadeh N."/>
            <person name="Zhang X."/>
            <person name="Lyles A."/>
            <person name="Bassel-Duby R."/>
            <person name="Olson E.N."/>
            <person name="D'Mello S.R."/>
        </authorList>
    </citation>
    <scope>FUNCTION</scope>
</reference>
<reference key="15">
    <citation type="journal article" date="2007" name="Proc. Natl. Acad. Sci. U.S.A.">
        <title>FOXP3 interactions with histone acetyltransferase and class II histone deacetylases are required for repression.</title>
        <authorList>
            <person name="Li B."/>
            <person name="Samanta A."/>
            <person name="Song X."/>
            <person name="Iacono K.T."/>
            <person name="Bembas K."/>
            <person name="Tao R."/>
            <person name="Basu S."/>
            <person name="Riley J.L."/>
            <person name="Hancock W.W."/>
            <person name="Shen Y."/>
            <person name="Saouaf S.J."/>
            <person name="Greene M.I."/>
        </authorList>
    </citation>
    <scope>INTERACTION WITH FOXP3</scope>
</reference>
<reference key="16">
    <citation type="journal article" date="2009" name="Sci. Signal.">
        <title>Quantitative phosphoproteomic analysis of T cell receptor signaling reveals system-wide modulation of protein-protein interactions.</title>
        <authorList>
            <person name="Mayya V."/>
            <person name="Lundgren D.H."/>
            <person name="Hwang S.-I."/>
            <person name="Rezaul K."/>
            <person name="Wu L."/>
            <person name="Eng J.K."/>
            <person name="Rodionov V."/>
            <person name="Han D.K."/>
        </authorList>
    </citation>
    <scope>PHOSPHORYLATION [LARGE SCALE ANALYSIS] AT SER-22</scope>
    <scope>IDENTIFICATION BY MASS SPECTROMETRY [LARGE SCALE ANALYSIS]</scope>
    <source>
        <tissue>Leukemic T-cell</tissue>
    </source>
</reference>
<reference key="17">
    <citation type="journal article" date="2010" name="FEBS Lett.">
        <title>Protein kinase C-related kinase targets nuclear localization signals in a subset of class IIa histone deacetylases.</title>
        <authorList>
            <person name="Harrison B.C."/>
            <person name="Huynh K."/>
            <person name="Lundgaard G.L."/>
            <person name="Helmke S.M."/>
            <person name="Perryman M.B."/>
            <person name="McKinsey T.A."/>
        </authorList>
    </citation>
    <scope>PHOSPHORYLATION</scope>
</reference>
<reference key="18">
    <citation type="journal article" date="2011" name="Nature">
        <title>Exome sequencing identifies frequent mutation of the SWI/SNF complex gene PBRM1 in renal carcinoma.</title>
        <authorList>
            <person name="Varela I."/>
            <person name="Tarpey P."/>
            <person name="Raine K."/>
            <person name="Huang D."/>
            <person name="Ong C.K."/>
            <person name="Stephens P."/>
            <person name="Davies H."/>
            <person name="Jones D."/>
            <person name="Lin M.L."/>
            <person name="Teague J."/>
            <person name="Bignell G."/>
            <person name="Butler A."/>
            <person name="Cho J."/>
            <person name="Dalgliesh G.L."/>
            <person name="Galappaththige D."/>
            <person name="Greenman C."/>
            <person name="Hardy C."/>
            <person name="Jia M."/>
            <person name="Latimer C."/>
            <person name="Lau K.W."/>
            <person name="Marshall J."/>
            <person name="McLaren S."/>
            <person name="Menzies A."/>
            <person name="Mudie L."/>
            <person name="Stebbings L."/>
            <person name="Largaespada D.A."/>
            <person name="Wessels L.F.A."/>
            <person name="Richard S."/>
            <person name="Kahnoski R.J."/>
            <person name="Anema J."/>
            <person name="Tuveson D.A."/>
            <person name="Perez-Mancera P.A."/>
            <person name="Mustonen V."/>
            <person name="Fischer A."/>
            <person name="Adams D.J."/>
            <person name="Rust A."/>
            <person name="Chan-On W."/>
            <person name="Subimerb C."/>
            <person name="Dykema K."/>
            <person name="Furge K."/>
            <person name="Campbell P.J."/>
            <person name="Teh B.T."/>
            <person name="Stratton M.R."/>
            <person name="Futreal P.A."/>
        </authorList>
    </citation>
    <scope>VARIANT THR-921</scope>
</reference>
<reference key="19">
    <citation type="journal article" date="2022" name="J. Med. Genet.">
        <title>New locus underlying auriculocondylar syndrome (ARCND): 430 kb duplication involving TWIST1 regulatory elements.</title>
        <authorList>
            <person name="Romanelli Tavares V.L."/>
            <person name="Guimaraes-Ramos S.L."/>
            <person name="Zhou Y."/>
            <person name="Masotti C."/>
            <person name="Ezquina S."/>
            <person name="Moreira D.P."/>
            <person name="Buermans H."/>
            <person name="Freitas R.S."/>
            <person name="Den Dunnen J.T."/>
            <person name="Twigg S.R.F."/>
            <person name="Passos-Bueno M.R."/>
        </authorList>
    </citation>
    <scope>INVOLVEMENT IN ARCND4</scope>
</reference>
<name>HDAC9_HUMAN</name>